<reference key="1">
    <citation type="journal article" date="1997" name="Science">
        <title>The complete genome sequence of Escherichia coli K-12.</title>
        <authorList>
            <person name="Blattner F.R."/>
            <person name="Plunkett G. III"/>
            <person name="Bloch C.A."/>
            <person name="Perna N.T."/>
            <person name="Burland V."/>
            <person name="Riley M."/>
            <person name="Collado-Vides J."/>
            <person name="Glasner J.D."/>
            <person name="Rode C.K."/>
            <person name="Mayhew G.F."/>
            <person name="Gregor J."/>
            <person name="Davis N.W."/>
            <person name="Kirkpatrick H.A."/>
            <person name="Goeden M.A."/>
            <person name="Rose D.J."/>
            <person name="Mau B."/>
            <person name="Shao Y."/>
        </authorList>
    </citation>
    <scope>NUCLEOTIDE SEQUENCE [LARGE SCALE GENOMIC DNA]</scope>
    <source>
        <strain>K12 / MG1655 / ATCC 47076</strain>
    </source>
</reference>
<reference key="2">
    <citation type="journal article" date="2006" name="Mol. Syst. Biol.">
        <title>Highly accurate genome sequences of Escherichia coli K-12 strains MG1655 and W3110.</title>
        <authorList>
            <person name="Hayashi K."/>
            <person name="Morooka N."/>
            <person name="Yamamoto Y."/>
            <person name="Fujita K."/>
            <person name="Isono K."/>
            <person name="Choi S."/>
            <person name="Ohtsubo E."/>
            <person name="Baba T."/>
            <person name="Wanner B.L."/>
            <person name="Mori H."/>
            <person name="Horiuchi T."/>
        </authorList>
    </citation>
    <scope>NUCLEOTIDE SEQUENCE [LARGE SCALE GENOMIC DNA]</scope>
    <source>
        <strain>K12 / W3110 / ATCC 27325 / DSM 5911</strain>
    </source>
</reference>
<protein>
    <recommendedName>
        <fullName>Uncharacterized protein YeiS</fullName>
    </recommendedName>
</protein>
<sequence length="79" mass="9264">MDVQQFFVVAVFFLIPIFCFREAWKGWRAGAIDKRVKNAPEPVYVWRAKNPGLFFAYMVAYIGFGILSIGMIVYLIFYR</sequence>
<evidence type="ECO:0000255" key="1"/>
<evidence type="ECO:0000305" key="2"/>
<proteinExistence type="predicted"/>
<keyword id="KW-0472">Membrane</keyword>
<keyword id="KW-1185">Reference proteome</keyword>
<keyword id="KW-0812">Transmembrane</keyword>
<keyword id="KW-1133">Transmembrane helix</keyword>
<dbReference type="EMBL" id="U00096">
    <property type="protein sequence ID" value="AAC75206.1"/>
    <property type="molecule type" value="Genomic_DNA"/>
</dbReference>
<dbReference type="EMBL" id="AP009048">
    <property type="protein sequence ID" value="BAE76622.1"/>
    <property type="molecule type" value="Genomic_DNA"/>
</dbReference>
<dbReference type="PIR" id="H64982">
    <property type="entry name" value="H64982"/>
</dbReference>
<dbReference type="RefSeq" id="NP_416650.1">
    <property type="nucleotide sequence ID" value="NC_000913.3"/>
</dbReference>
<dbReference type="RefSeq" id="WP_000383096.1">
    <property type="nucleotide sequence ID" value="NZ_STEB01000002.1"/>
</dbReference>
<dbReference type="SMR" id="P64536"/>
<dbReference type="BioGRID" id="4259168">
    <property type="interactions" value="11"/>
</dbReference>
<dbReference type="FunCoup" id="P64536">
    <property type="interactions" value="11"/>
</dbReference>
<dbReference type="STRING" id="511145.b2145"/>
<dbReference type="PaxDb" id="511145-b2145"/>
<dbReference type="EnsemblBacteria" id="AAC75206">
    <property type="protein sequence ID" value="AAC75206"/>
    <property type="gene ID" value="b2145"/>
</dbReference>
<dbReference type="GeneID" id="948983"/>
<dbReference type="KEGG" id="ecj:JW5359"/>
<dbReference type="KEGG" id="eco:b2145"/>
<dbReference type="KEGG" id="ecoc:C3026_12020"/>
<dbReference type="PATRIC" id="fig|511145.12.peg.2227"/>
<dbReference type="EchoBASE" id="EB3826"/>
<dbReference type="eggNOG" id="ENOG50334PZ">
    <property type="taxonomic scope" value="Bacteria"/>
</dbReference>
<dbReference type="HOGENOM" id="CLU_196596_0_0_6"/>
<dbReference type="InParanoid" id="P64536"/>
<dbReference type="OMA" id="HADPIQY"/>
<dbReference type="OrthoDB" id="6587015at2"/>
<dbReference type="PhylomeDB" id="P64536"/>
<dbReference type="BioCyc" id="EcoCyc:G7144-MONOMER"/>
<dbReference type="PRO" id="PR:P64536"/>
<dbReference type="Proteomes" id="UP000000625">
    <property type="component" value="Chromosome"/>
</dbReference>
<dbReference type="GO" id="GO:0016020">
    <property type="term" value="C:membrane"/>
    <property type="evidence" value="ECO:0007669"/>
    <property type="project" value="UniProtKB-SubCell"/>
</dbReference>
<dbReference type="InterPro" id="IPR020155">
    <property type="entry name" value="Uncharacterised_YeiS"/>
</dbReference>
<dbReference type="Pfam" id="PF10808">
    <property type="entry name" value="DUF2542"/>
    <property type="match status" value="1"/>
</dbReference>
<name>YEIS_ECOLI</name>
<accession>P64536</accession>
<accession>P76439</accession>
<accession>Q2MAT4</accession>
<feature type="chain" id="PRO_0000169152" description="Uncharacterized protein YeiS">
    <location>
        <begin position="1"/>
        <end position="79"/>
    </location>
</feature>
<feature type="transmembrane region" description="Helical" evidence="1">
    <location>
        <begin position="53"/>
        <end position="73"/>
    </location>
</feature>
<organism>
    <name type="scientific">Escherichia coli (strain K12)</name>
    <dbReference type="NCBI Taxonomy" id="83333"/>
    <lineage>
        <taxon>Bacteria</taxon>
        <taxon>Pseudomonadati</taxon>
        <taxon>Pseudomonadota</taxon>
        <taxon>Gammaproteobacteria</taxon>
        <taxon>Enterobacterales</taxon>
        <taxon>Enterobacteriaceae</taxon>
        <taxon>Escherichia</taxon>
    </lineage>
</organism>
<gene>
    <name type="primary">yeiS</name>
    <name type="ordered locus">b2145</name>
    <name type="ordered locus">JW5359</name>
</gene>
<comment type="subcellular location">
    <subcellularLocation>
        <location evidence="2">Membrane</location>
        <topology evidence="2">Single-pass membrane protein</topology>
    </subcellularLocation>
</comment>